<proteinExistence type="inferred from homology"/>
<dbReference type="EC" id="2.3.1.117" evidence="1"/>
<dbReference type="EMBL" id="CU468135">
    <property type="protein sequence ID" value="CAO95932.1"/>
    <property type="molecule type" value="Genomic_DNA"/>
</dbReference>
<dbReference type="RefSeq" id="WP_012440634.1">
    <property type="nucleotide sequence ID" value="NC_010694.1"/>
</dbReference>
<dbReference type="SMR" id="B2VE16"/>
<dbReference type="STRING" id="465817.ETA_08860"/>
<dbReference type="KEGG" id="eta:ETA_08860"/>
<dbReference type="eggNOG" id="COG2171">
    <property type="taxonomic scope" value="Bacteria"/>
</dbReference>
<dbReference type="HOGENOM" id="CLU_050859_0_1_6"/>
<dbReference type="OrthoDB" id="9775362at2"/>
<dbReference type="UniPathway" id="UPA00034">
    <property type="reaction ID" value="UER00019"/>
</dbReference>
<dbReference type="Proteomes" id="UP000001726">
    <property type="component" value="Chromosome"/>
</dbReference>
<dbReference type="GO" id="GO:0005737">
    <property type="term" value="C:cytoplasm"/>
    <property type="evidence" value="ECO:0007669"/>
    <property type="project" value="UniProtKB-SubCell"/>
</dbReference>
<dbReference type="GO" id="GO:0008666">
    <property type="term" value="F:2,3,4,5-tetrahydropyridine-2,6-dicarboxylate N-succinyltransferase activity"/>
    <property type="evidence" value="ECO:0007669"/>
    <property type="project" value="UniProtKB-UniRule"/>
</dbReference>
<dbReference type="GO" id="GO:0016779">
    <property type="term" value="F:nucleotidyltransferase activity"/>
    <property type="evidence" value="ECO:0007669"/>
    <property type="project" value="TreeGrafter"/>
</dbReference>
<dbReference type="GO" id="GO:0019877">
    <property type="term" value="P:diaminopimelate biosynthetic process"/>
    <property type="evidence" value="ECO:0007669"/>
    <property type="project" value="UniProtKB-UniRule"/>
</dbReference>
<dbReference type="GO" id="GO:0009089">
    <property type="term" value="P:lysine biosynthetic process via diaminopimelate"/>
    <property type="evidence" value="ECO:0007669"/>
    <property type="project" value="UniProtKB-UniRule"/>
</dbReference>
<dbReference type="CDD" id="cd03350">
    <property type="entry name" value="LbH_THP_succinylT"/>
    <property type="match status" value="1"/>
</dbReference>
<dbReference type="FunFam" id="2.160.10.10:FF:000004">
    <property type="entry name" value="2,3,4,5-tetrahydropyridine-2,6-dicarboxylate N-succinyltransferase"/>
    <property type="match status" value="1"/>
</dbReference>
<dbReference type="Gene3D" id="2.160.10.10">
    <property type="entry name" value="Hexapeptide repeat proteins"/>
    <property type="match status" value="1"/>
</dbReference>
<dbReference type="Gene3D" id="1.10.166.10">
    <property type="entry name" value="Tetrahydrodipicolinate-N-succinyltransferase, N-terminal domain"/>
    <property type="match status" value="1"/>
</dbReference>
<dbReference type="HAMAP" id="MF_00811">
    <property type="entry name" value="DapD"/>
    <property type="match status" value="1"/>
</dbReference>
<dbReference type="InterPro" id="IPR005664">
    <property type="entry name" value="DapD_Trfase_Hexpep_rpt_fam"/>
</dbReference>
<dbReference type="InterPro" id="IPR001451">
    <property type="entry name" value="Hexapep"/>
</dbReference>
<dbReference type="InterPro" id="IPR018357">
    <property type="entry name" value="Hexapep_transf_CS"/>
</dbReference>
<dbReference type="InterPro" id="IPR023180">
    <property type="entry name" value="THP_succinylTrfase_dom1"/>
</dbReference>
<dbReference type="InterPro" id="IPR037133">
    <property type="entry name" value="THP_succinylTrfase_N_sf"/>
</dbReference>
<dbReference type="InterPro" id="IPR011004">
    <property type="entry name" value="Trimer_LpxA-like_sf"/>
</dbReference>
<dbReference type="NCBIfam" id="TIGR00965">
    <property type="entry name" value="dapD"/>
    <property type="match status" value="1"/>
</dbReference>
<dbReference type="NCBIfam" id="NF008808">
    <property type="entry name" value="PRK11830.1"/>
    <property type="match status" value="1"/>
</dbReference>
<dbReference type="PANTHER" id="PTHR19136:SF52">
    <property type="entry name" value="2,3,4,5-TETRAHYDROPYRIDINE-2,6-DICARBOXYLATE N-SUCCINYLTRANSFERASE"/>
    <property type="match status" value="1"/>
</dbReference>
<dbReference type="PANTHER" id="PTHR19136">
    <property type="entry name" value="MOLYBDENUM COFACTOR GUANYLYLTRANSFERASE"/>
    <property type="match status" value="1"/>
</dbReference>
<dbReference type="Pfam" id="PF14602">
    <property type="entry name" value="Hexapep_2"/>
    <property type="match status" value="1"/>
</dbReference>
<dbReference type="Pfam" id="PF14805">
    <property type="entry name" value="THDPS_N_2"/>
    <property type="match status" value="1"/>
</dbReference>
<dbReference type="SUPFAM" id="SSF51161">
    <property type="entry name" value="Trimeric LpxA-like enzymes"/>
    <property type="match status" value="1"/>
</dbReference>
<dbReference type="PROSITE" id="PS00101">
    <property type="entry name" value="HEXAPEP_TRANSFERASES"/>
    <property type="match status" value="1"/>
</dbReference>
<organism>
    <name type="scientific">Erwinia tasmaniensis (strain DSM 17950 / CFBP 7177 / CIP 109463 / NCPPB 4357 / Et1/99)</name>
    <dbReference type="NCBI Taxonomy" id="465817"/>
    <lineage>
        <taxon>Bacteria</taxon>
        <taxon>Pseudomonadati</taxon>
        <taxon>Pseudomonadota</taxon>
        <taxon>Gammaproteobacteria</taxon>
        <taxon>Enterobacterales</taxon>
        <taxon>Erwiniaceae</taxon>
        <taxon>Erwinia</taxon>
    </lineage>
</organism>
<gene>
    <name evidence="1" type="primary">dapD</name>
    <name type="ordered locus">ETA_08860</name>
</gene>
<reference key="1">
    <citation type="journal article" date="2008" name="Environ. Microbiol.">
        <title>The genome of Erwinia tasmaniensis strain Et1/99, a non-pathogenic bacterium in the genus Erwinia.</title>
        <authorList>
            <person name="Kube M."/>
            <person name="Migdoll A.M."/>
            <person name="Mueller I."/>
            <person name="Kuhl H."/>
            <person name="Beck A."/>
            <person name="Reinhardt R."/>
            <person name="Geider K."/>
        </authorList>
    </citation>
    <scope>NUCLEOTIDE SEQUENCE [LARGE SCALE GENOMIC DNA]</scope>
    <source>
        <strain>DSM 17950 / CFBP 7177 / CIP 109463 / NCPPB 4357 / Et1/99</strain>
    </source>
</reference>
<keyword id="KW-0012">Acyltransferase</keyword>
<keyword id="KW-0028">Amino-acid biosynthesis</keyword>
<keyword id="KW-0963">Cytoplasm</keyword>
<keyword id="KW-0220">Diaminopimelate biosynthesis</keyword>
<keyword id="KW-0457">Lysine biosynthesis</keyword>
<keyword id="KW-1185">Reference proteome</keyword>
<keyword id="KW-0677">Repeat</keyword>
<keyword id="KW-0808">Transferase</keyword>
<feature type="chain" id="PRO_1000134049" description="2,3,4,5-tetrahydropyridine-2,6-dicarboxylate N-succinyltransferase">
    <location>
        <begin position="1"/>
        <end position="274"/>
    </location>
</feature>
<comment type="catalytic activity">
    <reaction evidence="1">
        <text>(S)-2,3,4,5-tetrahydrodipicolinate + succinyl-CoA + H2O = (S)-2-succinylamino-6-oxoheptanedioate + CoA</text>
        <dbReference type="Rhea" id="RHEA:17325"/>
        <dbReference type="ChEBI" id="CHEBI:15377"/>
        <dbReference type="ChEBI" id="CHEBI:15685"/>
        <dbReference type="ChEBI" id="CHEBI:16845"/>
        <dbReference type="ChEBI" id="CHEBI:57287"/>
        <dbReference type="ChEBI" id="CHEBI:57292"/>
        <dbReference type="EC" id="2.3.1.117"/>
    </reaction>
</comment>
<comment type="pathway">
    <text evidence="1">Amino-acid biosynthesis; L-lysine biosynthesis via DAP pathway; LL-2,6-diaminopimelate from (S)-tetrahydrodipicolinate (succinylase route): step 1/3.</text>
</comment>
<comment type="subcellular location">
    <subcellularLocation>
        <location evidence="1">Cytoplasm</location>
    </subcellularLocation>
</comment>
<comment type="similarity">
    <text evidence="1">Belongs to the transferase hexapeptide repeat family.</text>
</comment>
<protein>
    <recommendedName>
        <fullName evidence="1">2,3,4,5-tetrahydropyridine-2,6-dicarboxylate N-succinyltransferase</fullName>
        <ecNumber evidence="1">2.3.1.117</ecNumber>
    </recommendedName>
    <alternativeName>
        <fullName evidence="1">Tetrahydrodipicolinate N-succinyltransferase</fullName>
        <shortName evidence="1">THP succinyltransferase</shortName>
        <shortName evidence="1">Tetrahydropicolinate succinylase</shortName>
    </alternativeName>
</protein>
<accession>B2VE16</accession>
<evidence type="ECO:0000255" key="1">
    <source>
        <dbReference type="HAMAP-Rule" id="MF_00811"/>
    </source>
</evidence>
<name>DAPD_ERWT9</name>
<sequence>MQQLQNVIEAAFERRADITPVNADTAIREAVSQVIALLDSGALRVAEKIDGQWVTHQWLKKAVLLSFRINDNQVIEGAESRFYDKVPMKFADYDEARFKKEGFRVVPPAAVRQGSFIARNTVLMPSYVNIGAYVDEGSMVDTWATVGSCAQIGKNVHLSGGVGIGGVLEPLQANPTIIEDNCFIGARSEIVEGVIVEEGSVISMGVYIGQSTKIYDRETGEVHYGRVPAGSVVVSGNLPSKDGSYSLYCAVIVKKVDAKTLSKTGINELLRTID</sequence>